<name>RS19_STRP6</name>
<accession>Q5XED1</accession>
<organism>
    <name type="scientific">Streptococcus pyogenes serotype M6 (strain ATCC BAA-946 / MGAS10394)</name>
    <dbReference type="NCBI Taxonomy" id="286636"/>
    <lineage>
        <taxon>Bacteria</taxon>
        <taxon>Bacillati</taxon>
        <taxon>Bacillota</taxon>
        <taxon>Bacilli</taxon>
        <taxon>Lactobacillales</taxon>
        <taxon>Streptococcaceae</taxon>
        <taxon>Streptococcus</taxon>
    </lineage>
</organism>
<evidence type="ECO:0000255" key="1">
    <source>
        <dbReference type="HAMAP-Rule" id="MF_00531"/>
    </source>
</evidence>
<evidence type="ECO:0000305" key="2"/>
<gene>
    <name evidence="1" type="primary">rpsS</name>
    <name type="ordered locus">M6_Spy0097</name>
</gene>
<comment type="function">
    <text evidence="1">Protein S19 forms a complex with S13 that binds strongly to the 16S ribosomal RNA.</text>
</comment>
<comment type="similarity">
    <text evidence="1">Belongs to the universal ribosomal protein uS19 family.</text>
</comment>
<comment type="sequence caution" evidence="2">
    <conflict type="erroneous initiation">
        <sequence resource="EMBL-CDS" id="AAT86232"/>
    </conflict>
</comment>
<keyword id="KW-0687">Ribonucleoprotein</keyword>
<keyword id="KW-0689">Ribosomal protein</keyword>
<keyword id="KW-0694">RNA-binding</keyword>
<keyword id="KW-0699">rRNA-binding</keyword>
<sequence>MGRSLKKGPFVDEHLMKKVEAQANDEKKKVIKTWSRRSTIFPSFIGYTIAVYDGRKHVPVYIQEDMVGHKLGEFAPTRTYKGHAADDKKTRR</sequence>
<protein>
    <recommendedName>
        <fullName evidence="1">Small ribosomal subunit protein uS19</fullName>
    </recommendedName>
    <alternativeName>
        <fullName evidence="2">30S ribosomal protein S19</fullName>
    </alternativeName>
</protein>
<feature type="chain" id="PRO_0000129916" description="Small ribosomal subunit protein uS19">
    <location>
        <begin position="1"/>
        <end position="92"/>
    </location>
</feature>
<dbReference type="EMBL" id="CP000003">
    <property type="protein sequence ID" value="AAT86232.1"/>
    <property type="status" value="ALT_INIT"/>
    <property type="molecule type" value="Genomic_DNA"/>
</dbReference>
<dbReference type="RefSeq" id="WP_000533765.1">
    <property type="nucleotide sequence ID" value="NC_006086.1"/>
</dbReference>
<dbReference type="SMR" id="Q5XED1"/>
<dbReference type="GeneID" id="98392396"/>
<dbReference type="KEGG" id="spa:M6_Spy0097"/>
<dbReference type="HOGENOM" id="CLU_144911_0_0_9"/>
<dbReference type="Proteomes" id="UP000001167">
    <property type="component" value="Chromosome"/>
</dbReference>
<dbReference type="GO" id="GO:0005737">
    <property type="term" value="C:cytoplasm"/>
    <property type="evidence" value="ECO:0007669"/>
    <property type="project" value="UniProtKB-ARBA"/>
</dbReference>
<dbReference type="GO" id="GO:0015935">
    <property type="term" value="C:small ribosomal subunit"/>
    <property type="evidence" value="ECO:0007669"/>
    <property type="project" value="InterPro"/>
</dbReference>
<dbReference type="GO" id="GO:0019843">
    <property type="term" value="F:rRNA binding"/>
    <property type="evidence" value="ECO:0007669"/>
    <property type="project" value="UniProtKB-UniRule"/>
</dbReference>
<dbReference type="GO" id="GO:0003735">
    <property type="term" value="F:structural constituent of ribosome"/>
    <property type="evidence" value="ECO:0007669"/>
    <property type="project" value="InterPro"/>
</dbReference>
<dbReference type="GO" id="GO:0000028">
    <property type="term" value="P:ribosomal small subunit assembly"/>
    <property type="evidence" value="ECO:0007669"/>
    <property type="project" value="TreeGrafter"/>
</dbReference>
<dbReference type="GO" id="GO:0006412">
    <property type="term" value="P:translation"/>
    <property type="evidence" value="ECO:0007669"/>
    <property type="project" value="UniProtKB-UniRule"/>
</dbReference>
<dbReference type="FunFam" id="3.30.860.10:FF:000001">
    <property type="entry name" value="30S ribosomal protein S19"/>
    <property type="match status" value="1"/>
</dbReference>
<dbReference type="Gene3D" id="3.30.860.10">
    <property type="entry name" value="30s Ribosomal Protein S19, Chain A"/>
    <property type="match status" value="1"/>
</dbReference>
<dbReference type="HAMAP" id="MF_00531">
    <property type="entry name" value="Ribosomal_uS19"/>
    <property type="match status" value="1"/>
</dbReference>
<dbReference type="InterPro" id="IPR002222">
    <property type="entry name" value="Ribosomal_uS19"/>
</dbReference>
<dbReference type="InterPro" id="IPR005732">
    <property type="entry name" value="Ribosomal_uS19_bac-type"/>
</dbReference>
<dbReference type="InterPro" id="IPR020934">
    <property type="entry name" value="Ribosomal_uS19_CS"/>
</dbReference>
<dbReference type="InterPro" id="IPR023575">
    <property type="entry name" value="Ribosomal_uS19_SF"/>
</dbReference>
<dbReference type="NCBIfam" id="TIGR01050">
    <property type="entry name" value="rpsS_bact"/>
    <property type="match status" value="1"/>
</dbReference>
<dbReference type="PANTHER" id="PTHR11880">
    <property type="entry name" value="RIBOSOMAL PROTEIN S19P FAMILY MEMBER"/>
    <property type="match status" value="1"/>
</dbReference>
<dbReference type="PANTHER" id="PTHR11880:SF8">
    <property type="entry name" value="SMALL RIBOSOMAL SUBUNIT PROTEIN US19M"/>
    <property type="match status" value="1"/>
</dbReference>
<dbReference type="Pfam" id="PF00203">
    <property type="entry name" value="Ribosomal_S19"/>
    <property type="match status" value="1"/>
</dbReference>
<dbReference type="PIRSF" id="PIRSF002144">
    <property type="entry name" value="Ribosomal_S19"/>
    <property type="match status" value="1"/>
</dbReference>
<dbReference type="PRINTS" id="PR00975">
    <property type="entry name" value="RIBOSOMALS19"/>
</dbReference>
<dbReference type="SUPFAM" id="SSF54570">
    <property type="entry name" value="Ribosomal protein S19"/>
    <property type="match status" value="1"/>
</dbReference>
<dbReference type="PROSITE" id="PS00323">
    <property type="entry name" value="RIBOSOMAL_S19"/>
    <property type="match status" value="1"/>
</dbReference>
<reference key="1">
    <citation type="journal article" date="2004" name="J. Infect. Dis.">
        <title>Progress toward characterization of the group A Streptococcus metagenome: complete genome sequence of a macrolide-resistant serotype M6 strain.</title>
        <authorList>
            <person name="Banks D.J."/>
            <person name="Porcella S.F."/>
            <person name="Barbian K.D."/>
            <person name="Beres S.B."/>
            <person name="Philips L.E."/>
            <person name="Voyich J.M."/>
            <person name="DeLeo F.R."/>
            <person name="Martin J.M."/>
            <person name="Somerville G.A."/>
            <person name="Musser J.M."/>
        </authorList>
    </citation>
    <scope>NUCLEOTIDE SEQUENCE [LARGE SCALE GENOMIC DNA]</scope>
    <source>
        <strain>ATCC BAA-946 / MGAS10394</strain>
    </source>
</reference>
<proteinExistence type="inferred from homology"/>